<keyword id="KW-0963">Cytoplasm</keyword>
<keyword id="KW-0269">Exonuclease</keyword>
<keyword id="KW-0378">Hydrolase</keyword>
<keyword id="KW-0433">Leucine-rich repeat</keyword>
<keyword id="KW-0460">Magnesium</keyword>
<keyword id="KW-0479">Metal-binding</keyword>
<keyword id="KW-0540">Nuclease</keyword>
<keyword id="KW-0539">Nucleus</keyword>
<keyword id="KW-1185">Reference proteome</keyword>
<keyword id="KW-0677">Repeat</keyword>
<keyword id="KW-0694">RNA-binding</keyword>
<keyword id="KW-0804">Transcription</keyword>
<keyword id="KW-0805">Transcription regulation</keyword>
<protein>
    <recommendedName>
        <fullName evidence="5">CCR4-Not complex 3'-5'-exoribonuclease subunit Ccr4</fullName>
        <ecNumber>3.1.13.4</ecNumber>
    </recommendedName>
    <alternativeName>
        <fullName>Carbon catabolite repressor protein 4</fullName>
    </alternativeName>
    <alternativeName>
        <fullName>Cytoplasmic deadenylase</fullName>
    </alternativeName>
    <alternativeName>
        <fullName>Glucose-repressible alcohol dehydrogenase transcriptional effector</fullName>
    </alternativeName>
</protein>
<name>CCR4_CANAL</name>
<sequence length="787" mass="90325">MNITNKFQHTPIQGQPQSNLQAQQILLSQLHQGQAQQQQQQQQQQQQQQQSSAGVLGSGFQPSDNFGESLNQNIYQNNYQRAQPSLQQQFFPQFQQSQQQPSQQANNASQLQQPYQPAQQMVRQTSHFQQQQQQQPSSQQFYSQQQASVLQQQQQQQIQLQSAHQQQSSLLNMNSINVDNPNSVYWQHQQQLCQISRGSNVPHYYARQYASNSRKAKNPYSEVKSVGLVEATRSMVASLEDEEEKKKKPINYQGTPTTSAALLHNKKSTQDIFEDDSMEEQRMRLKTQGKQLWCQLDLSGQGLVNISSKLFHYDFLESLYLSNNKLNSIPSSISKLRNLRTLDLSHNRINELPEELGLCFNLRYLFLFDNNIKTLPYSFGNMIELLFIGIEGNPLEPSIANLIAEKGTKELIATLRDQTTVKRTPKPRCWLTLEDDGEVVDSDEVYKVEPESSDNFTVLSYNTLCQHYATPKMYKFTPSWALQWDYRKNLLEKEVLNYNTDIVCMQEVETKTFQEFWLPVMTANGYKGYFFSKTRSKTMSETDSKKVDGCATFFKNDKFSLIHKQNFEYNSVCMGSDKYKKTKDLFNRFMNKDNIALISYLQHKESGEKIAVVNTHLHWDPAFNDVKALQVGILLEELQGIIKKYRHTNSNEDIKNSSIVVCGDFNSVKDSAVYQLFSTGASKGHEDMNGRDYGKFTEDGFHHPFKLKSAYEAVGELPFTNLTPAFTDNIDYIWYSTPTLQVKGLLGGVDEEYTSHSIGFPDANFPSDHVPILAKFQLKKGKKNHSV</sequence>
<dbReference type="EC" id="3.1.13.4"/>
<dbReference type="EMBL" id="CP017623">
    <property type="protein sequence ID" value="AOW26462.1"/>
    <property type="molecule type" value="Genomic_DNA"/>
</dbReference>
<dbReference type="EMBL" id="AL033501">
    <property type="protein sequence ID" value="CAA21997.1"/>
    <property type="molecule type" value="Genomic_DNA"/>
</dbReference>
<dbReference type="PIR" id="T18239">
    <property type="entry name" value="T18239"/>
</dbReference>
<dbReference type="RefSeq" id="XP_717638.2">
    <property type="nucleotide sequence ID" value="XM_712545.2"/>
</dbReference>
<dbReference type="SMR" id="Q5A761"/>
<dbReference type="FunCoup" id="Q5A761">
    <property type="interactions" value="479"/>
</dbReference>
<dbReference type="STRING" id="237561.Q5A761"/>
<dbReference type="EnsemblFungi" id="C1_08220W_A-T">
    <property type="protein sequence ID" value="C1_08220W_A-T-p1"/>
    <property type="gene ID" value="C1_08220W_A"/>
</dbReference>
<dbReference type="GeneID" id="3640749"/>
<dbReference type="KEGG" id="cal:CAALFM_C108220WA"/>
<dbReference type="CGD" id="CAL0000194050">
    <property type="gene designation" value="CCR4"/>
</dbReference>
<dbReference type="VEuPathDB" id="FungiDB:C1_08220W_A"/>
<dbReference type="eggNOG" id="KOG0620">
    <property type="taxonomic scope" value="Eukaryota"/>
</dbReference>
<dbReference type="HOGENOM" id="CLU_016428_4_1_1"/>
<dbReference type="InParanoid" id="Q5A761"/>
<dbReference type="OMA" id="EHRMVAP"/>
<dbReference type="OrthoDB" id="428734at2759"/>
<dbReference type="PRO" id="PR:Q5A761"/>
<dbReference type="Proteomes" id="UP000000559">
    <property type="component" value="Chromosome 1"/>
</dbReference>
<dbReference type="GO" id="GO:0030015">
    <property type="term" value="C:CCR4-NOT core complex"/>
    <property type="evidence" value="ECO:0007669"/>
    <property type="project" value="EnsemblFungi"/>
</dbReference>
<dbReference type="GO" id="GO:0016593">
    <property type="term" value="C:Cdc73/Paf1 complex"/>
    <property type="evidence" value="ECO:0007669"/>
    <property type="project" value="EnsemblFungi"/>
</dbReference>
<dbReference type="GO" id="GO:0000932">
    <property type="term" value="C:P-body"/>
    <property type="evidence" value="ECO:0007669"/>
    <property type="project" value="EnsemblFungi"/>
</dbReference>
<dbReference type="GO" id="GO:0000175">
    <property type="term" value="F:3'-5'-RNA exonuclease activity"/>
    <property type="evidence" value="ECO:0000318"/>
    <property type="project" value="GO_Central"/>
</dbReference>
<dbReference type="GO" id="GO:0046872">
    <property type="term" value="F:metal ion binding"/>
    <property type="evidence" value="ECO:0007669"/>
    <property type="project" value="UniProtKB-KW"/>
</dbReference>
<dbReference type="GO" id="GO:0004535">
    <property type="term" value="F:poly(A)-specific ribonuclease activity"/>
    <property type="evidence" value="ECO:0007669"/>
    <property type="project" value="UniProtKB-EC"/>
</dbReference>
<dbReference type="GO" id="GO:0003723">
    <property type="term" value="F:RNA binding"/>
    <property type="evidence" value="ECO:0007669"/>
    <property type="project" value="UniProtKB-KW"/>
</dbReference>
<dbReference type="GO" id="GO:0009267">
    <property type="term" value="P:cellular response to starvation"/>
    <property type="evidence" value="ECO:0000315"/>
    <property type="project" value="CGD"/>
</dbReference>
<dbReference type="GO" id="GO:0006260">
    <property type="term" value="P:DNA replication"/>
    <property type="evidence" value="ECO:0007669"/>
    <property type="project" value="EnsemblFungi"/>
</dbReference>
<dbReference type="GO" id="GO:0000076">
    <property type="term" value="P:DNA replication checkpoint signaling"/>
    <property type="evidence" value="ECO:0007669"/>
    <property type="project" value="EnsemblFungi"/>
</dbReference>
<dbReference type="GO" id="GO:0030447">
    <property type="term" value="P:filamentous growth"/>
    <property type="evidence" value="ECO:0000315"/>
    <property type="project" value="CGD"/>
</dbReference>
<dbReference type="GO" id="GO:0036180">
    <property type="term" value="P:filamentous growth of a population of unicellular organisms in response to biotic stimulus"/>
    <property type="evidence" value="ECO:0000315"/>
    <property type="project" value="CGD"/>
</dbReference>
<dbReference type="GO" id="GO:0036170">
    <property type="term" value="P:filamentous growth of a population of unicellular organisms in response to starvation"/>
    <property type="evidence" value="ECO:0000315"/>
    <property type="project" value="CGD"/>
</dbReference>
<dbReference type="GO" id="GO:0009272">
    <property type="term" value="P:fungal-type cell wall biogenesis"/>
    <property type="evidence" value="ECO:0000315"/>
    <property type="project" value="CGD"/>
</dbReference>
<dbReference type="GO" id="GO:0000289">
    <property type="term" value="P:nuclear-transcribed mRNA poly(A) tail shortening"/>
    <property type="evidence" value="ECO:0007669"/>
    <property type="project" value="EnsemblFungi"/>
</dbReference>
<dbReference type="GO" id="GO:0055091">
    <property type="term" value="P:phospholipid homeostasis"/>
    <property type="evidence" value="ECO:0000315"/>
    <property type="project" value="CGD"/>
</dbReference>
<dbReference type="GO" id="GO:0032968">
    <property type="term" value="P:positive regulation of transcription elongation by RNA polymerase II"/>
    <property type="evidence" value="ECO:0007669"/>
    <property type="project" value="EnsemblFungi"/>
</dbReference>
<dbReference type="GO" id="GO:0006368">
    <property type="term" value="P:transcription elongation by RNA polymerase II"/>
    <property type="evidence" value="ECO:0007669"/>
    <property type="project" value="EnsemblFungi"/>
</dbReference>
<dbReference type="GO" id="GO:0007089">
    <property type="term" value="P:traversing start control point of mitotic cell cycle"/>
    <property type="evidence" value="ECO:0007669"/>
    <property type="project" value="EnsemblFungi"/>
</dbReference>
<dbReference type="CDD" id="cd09097">
    <property type="entry name" value="Deadenylase_CCR4"/>
    <property type="match status" value="1"/>
</dbReference>
<dbReference type="FunFam" id="3.60.10.10:FF:000037">
    <property type="entry name" value="Glucose-repressible alcohol dehydrogenase transcriptional effector"/>
    <property type="match status" value="1"/>
</dbReference>
<dbReference type="FunFam" id="3.80.10.10:FF:000598">
    <property type="entry name" value="Glucose-repressible alcohol dehydrogenase transcriptional effector"/>
    <property type="match status" value="1"/>
</dbReference>
<dbReference type="Gene3D" id="3.60.10.10">
    <property type="entry name" value="Endonuclease/exonuclease/phosphatase"/>
    <property type="match status" value="1"/>
</dbReference>
<dbReference type="Gene3D" id="3.80.10.10">
    <property type="entry name" value="Ribonuclease Inhibitor"/>
    <property type="match status" value="1"/>
</dbReference>
<dbReference type="InterPro" id="IPR050410">
    <property type="entry name" value="CCR4/nocturin_mRNA_transcr"/>
</dbReference>
<dbReference type="InterPro" id="IPR036691">
    <property type="entry name" value="Endo/exonu/phosph_ase_sf"/>
</dbReference>
<dbReference type="InterPro" id="IPR005135">
    <property type="entry name" value="Endo/exonuclease/phosphatase"/>
</dbReference>
<dbReference type="InterPro" id="IPR001611">
    <property type="entry name" value="Leu-rich_rpt"/>
</dbReference>
<dbReference type="InterPro" id="IPR003591">
    <property type="entry name" value="Leu-rich_rpt_typical-subtyp"/>
</dbReference>
<dbReference type="InterPro" id="IPR032675">
    <property type="entry name" value="LRR_dom_sf"/>
</dbReference>
<dbReference type="PANTHER" id="PTHR12121">
    <property type="entry name" value="CARBON CATABOLITE REPRESSOR PROTEIN 4"/>
    <property type="match status" value="1"/>
</dbReference>
<dbReference type="PANTHER" id="PTHR12121:SF100">
    <property type="entry name" value="POLY(A)-SPECIFIC RIBONUCLEASE"/>
    <property type="match status" value="1"/>
</dbReference>
<dbReference type="Pfam" id="PF03372">
    <property type="entry name" value="Exo_endo_phos"/>
    <property type="match status" value="1"/>
</dbReference>
<dbReference type="Pfam" id="PF00560">
    <property type="entry name" value="LRR_1"/>
    <property type="match status" value="1"/>
</dbReference>
<dbReference type="Pfam" id="PF13855">
    <property type="entry name" value="LRR_8"/>
    <property type="match status" value="1"/>
</dbReference>
<dbReference type="PRINTS" id="PR00019">
    <property type="entry name" value="LEURICHRPT"/>
</dbReference>
<dbReference type="SMART" id="SM00369">
    <property type="entry name" value="LRR_TYP"/>
    <property type="match status" value="3"/>
</dbReference>
<dbReference type="SUPFAM" id="SSF56219">
    <property type="entry name" value="DNase I-like"/>
    <property type="match status" value="1"/>
</dbReference>
<dbReference type="SUPFAM" id="SSF52058">
    <property type="entry name" value="L domain-like"/>
    <property type="match status" value="1"/>
</dbReference>
<dbReference type="PROSITE" id="PS51450">
    <property type="entry name" value="LRR"/>
    <property type="match status" value="3"/>
</dbReference>
<gene>
    <name type="primary">CCR4</name>
    <name type="ordered locus">CAALFM_C108220WA</name>
    <name type="ORF">Ca41C10.13c</name>
    <name type="ORF">CaO19.12567</name>
    <name type="ORF">CaO19.5101</name>
</gene>
<proteinExistence type="inferred from homology"/>
<organism>
    <name type="scientific">Candida albicans (strain SC5314 / ATCC MYA-2876)</name>
    <name type="common">Yeast</name>
    <dbReference type="NCBI Taxonomy" id="237561"/>
    <lineage>
        <taxon>Eukaryota</taxon>
        <taxon>Fungi</taxon>
        <taxon>Dikarya</taxon>
        <taxon>Ascomycota</taxon>
        <taxon>Saccharomycotina</taxon>
        <taxon>Pichiomycetes</taxon>
        <taxon>Debaryomycetaceae</taxon>
        <taxon>Candida/Lodderomyces clade</taxon>
        <taxon>Candida</taxon>
    </lineage>
</organism>
<reference key="1">
    <citation type="journal article" date="2004" name="Proc. Natl. Acad. Sci. U.S.A.">
        <title>The diploid genome sequence of Candida albicans.</title>
        <authorList>
            <person name="Jones T."/>
            <person name="Federspiel N.A."/>
            <person name="Chibana H."/>
            <person name="Dungan J."/>
            <person name="Kalman S."/>
            <person name="Magee B.B."/>
            <person name="Newport G."/>
            <person name="Thorstenson Y.R."/>
            <person name="Agabian N."/>
            <person name="Magee P.T."/>
            <person name="Davis R.W."/>
            <person name="Scherer S."/>
        </authorList>
    </citation>
    <scope>NUCLEOTIDE SEQUENCE [LARGE SCALE GENOMIC DNA]</scope>
    <source>
        <strain>SC5314 / ATCC MYA-2876</strain>
    </source>
</reference>
<reference key="2">
    <citation type="journal article" date="2007" name="Genome Biol.">
        <title>Assembly of the Candida albicans genome into sixteen supercontigs aligned on the eight chromosomes.</title>
        <authorList>
            <person name="van het Hoog M."/>
            <person name="Rast T.J."/>
            <person name="Martchenko M."/>
            <person name="Grindle S."/>
            <person name="Dignard D."/>
            <person name="Hogues H."/>
            <person name="Cuomo C."/>
            <person name="Berriman M."/>
            <person name="Scherer S."/>
            <person name="Magee B.B."/>
            <person name="Whiteway M."/>
            <person name="Chibana H."/>
            <person name="Nantel A."/>
            <person name="Magee P.T."/>
        </authorList>
    </citation>
    <scope>GENOME REANNOTATION</scope>
    <source>
        <strain>SC5314 / ATCC MYA-2876</strain>
    </source>
</reference>
<reference key="3">
    <citation type="journal article" date="2013" name="Genome Biol.">
        <title>Assembly of a phased diploid Candida albicans genome facilitates allele-specific measurements and provides a simple model for repeat and indel structure.</title>
        <authorList>
            <person name="Muzzey D."/>
            <person name="Schwartz K."/>
            <person name="Weissman J.S."/>
            <person name="Sherlock G."/>
        </authorList>
    </citation>
    <scope>NUCLEOTIDE SEQUENCE [LARGE SCALE GENOMIC DNA]</scope>
    <scope>GENOME REANNOTATION</scope>
    <source>
        <strain>SC5314 / ATCC MYA-2876</strain>
    </source>
</reference>
<reference key="4">
    <citation type="submission" date="1998-11" db="EMBL/GenBank/DDBJ databases">
        <title>Candida albicans strain 1161 genome pilot sequencing project.</title>
        <authorList>
            <person name="Taylor K."/>
            <person name="Harris D."/>
            <person name="Barrell B.G."/>
            <person name="Rajandream M.A."/>
        </authorList>
    </citation>
    <scope>NUCLEOTIDE SEQUENCE [LARGE SCALE GENOMIC DNA] OF 199-787</scope>
    <source>
        <strain>1161</strain>
    </source>
</reference>
<comment type="function">
    <text evidence="3">Acts as a catalytic component of the CCR4-NOT core complex, which in the nucleus seems to be a general transcription factor, and in the cytoplasm the major mRNA deadenylase involved in mRNA turnover (By similarity). Ccr4 has 3'-5' RNase activity with a strong preference for polyadenylated substrates and also low exonuclease activity towards single-stranded DNA (By similarity).</text>
</comment>
<comment type="catalytic activity">
    <reaction>
        <text>Exonucleolytic cleavage of poly(A) to 5'-AMP.</text>
        <dbReference type="EC" id="3.1.13.4"/>
    </reaction>
</comment>
<comment type="cofactor">
    <cofactor evidence="1">
        <name>Mg(2+)</name>
        <dbReference type="ChEBI" id="CHEBI:18420"/>
    </cofactor>
</comment>
<comment type="subcellular location">
    <subcellularLocation>
        <location evidence="1">Cytoplasm</location>
    </subcellularLocation>
    <subcellularLocation>
        <location evidence="1">Nucleus</location>
    </subcellularLocation>
</comment>
<comment type="similarity">
    <text evidence="5">Belongs to the CCR4/nocturin family.</text>
</comment>
<feature type="chain" id="PRO_0000290607" description="CCR4-Not complex 3'-5'-exoribonuclease subunit Ccr4">
    <location>
        <begin position="1"/>
        <end position="787"/>
    </location>
</feature>
<feature type="repeat" description="LRR 1">
    <location>
        <begin position="291"/>
        <end position="313"/>
    </location>
</feature>
<feature type="repeat" description="LRR 2">
    <location>
        <begin position="315"/>
        <end position="336"/>
    </location>
</feature>
<feature type="repeat" description="LRR 3">
    <location>
        <begin position="338"/>
        <end position="359"/>
    </location>
</feature>
<feature type="repeat" description="LRR 4">
    <location>
        <begin position="361"/>
        <end position="382"/>
    </location>
</feature>
<feature type="repeat" description="LRR 5">
    <location>
        <begin position="384"/>
        <end position="406"/>
    </location>
</feature>
<feature type="region of interest" description="Disordered" evidence="4">
    <location>
        <begin position="37"/>
        <end position="70"/>
    </location>
</feature>
<feature type="region of interest" description="Disordered" evidence="4">
    <location>
        <begin position="92"/>
        <end position="137"/>
    </location>
</feature>
<feature type="compositionally biased region" description="Low complexity" evidence="4">
    <location>
        <begin position="37"/>
        <end position="54"/>
    </location>
</feature>
<feature type="compositionally biased region" description="Polar residues" evidence="4">
    <location>
        <begin position="60"/>
        <end position="70"/>
    </location>
</feature>
<feature type="binding site" evidence="2">
    <location>
        <position position="507"/>
    </location>
    <ligand>
        <name>Mg(2+)</name>
        <dbReference type="ChEBI" id="CHEBI:18420"/>
    </ligand>
</feature>
<feature type="sequence conflict" description="In Ref. 4; CAA21997." evidence="5" ref="4">
    <original>I</original>
    <variation>V</variation>
    <location>
        <position position="562"/>
    </location>
</feature>
<feature type="sequence conflict" description="In Ref. 4; CAA21997." evidence="5" ref="4">
    <original>G</original>
    <variation>R</variation>
    <location>
        <position position="748"/>
    </location>
</feature>
<feature type="sequence conflict" description="In Ref. 4; CAA21997." evidence="5" ref="4">
    <original>N</original>
    <variation>T</variation>
    <location>
        <position position="784"/>
    </location>
</feature>
<accession>Q5A761</accession>
<accession>A0A1D8PE96</accession>
<accession>O94047</accession>
<evidence type="ECO:0000250" key="1"/>
<evidence type="ECO:0000250" key="2">
    <source>
        <dbReference type="UniProtKB" id="O95551"/>
    </source>
</evidence>
<evidence type="ECO:0000250" key="3">
    <source>
        <dbReference type="UniProtKB" id="P31384"/>
    </source>
</evidence>
<evidence type="ECO:0000256" key="4">
    <source>
        <dbReference type="SAM" id="MobiDB-lite"/>
    </source>
</evidence>
<evidence type="ECO:0000305" key="5"/>